<keyword id="KW-0067">ATP-binding</keyword>
<keyword id="KW-0347">Helicase</keyword>
<keyword id="KW-0378">Hydrolase</keyword>
<keyword id="KW-0547">Nucleotide-binding</keyword>
<keyword id="KW-1185">Reference proteome</keyword>
<keyword id="KW-0694">RNA-binding</keyword>
<keyword id="KW-0804">Transcription</keyword>
<keyword id="KW-0805">Transcription regulation</keyword>
<keyword id="KW-0806">Transcription termination</keyword>
<gene>
    <name evidence="1" type="primary">rho</name>
    <name type="ordered locus">BB_0230</name>
</gene>
<dbReference type="EC" id="3.6.4.-" evidence="1"/>
<dbReference type="EMBL" id="L07656">
    <property type="protein sequence ID" value="AAA71920.1"/>
    <property type="status" value="ALT_INIT"/>
    <property type="molecule type" value="Unassigned_DNA"/>
</dbReference>
<dbReference type="EMBL" id="U35673">
    <property type="protein sequence ID" value="AAB41463.1"/>
    <property type="molecule type" value="Genomic_DNA"/>
</dbReference>
<dbReference type="EMBL" id="AE000783">
    <property type="protein sequence ID" value="AAC66619.1"/>
    <property type="molecule type" value="Genomic_DNA"/>
</dbReference>
<dbReference type="EMBL" id="L46347">
    <property type="protein sequence ID" value="AAA73991.1"/>
    <property type="molecule type" value="Genomic_DNA"/>
</dbReference>
<dbReference type="PIR" id="F70128">
    <property type="entry name" value="F70128"/>
</dbReference>
<dbReference type="RefSeq" id="NP_212364.1">
    <property type="nucleotide sequence ID" value="NC_001318.1"/>
</dbReference>
<dbReference type="RefSeq" id="WP_010889711.1">
    <property type="nucleotide sequence ID" value="NC_001318.1"/>
</dbReference>
<dbReference type="SMR" id="P33561"/>
<dbReference type="STRING" id="224326.BB_0230"/>
<dbReference type="PaxDb" id="224326-BB_0230"/>
<dbReference type="EnsemblBacteria" id="AAC66619">
    <property type="protein sequence ID" value="AAC66619"/>
    <property type="gene ID" value="BB_0230"/>
</dbReference>
<dbReference type="KEGG" id="bbu:BB_0230"/>
<dbReference type="PATRIC" id="fig|224326.49.peg.629"/>
<dbReference type="HOGENOM" id="CLU_016377_4_3_12"/>
<dbReference type="OrthoDB" id="9805197at2"/>
<dbReference type="Proteomes" id="UP000001807">
    <property type="component" value="Chromosome"/>
</dbReference>
<dbReference type="GO" id="GO:0005524">
    <property type="term" value="F:ATP binding"/>
    <property type="evidence" value="ECO:0007669"/>
    <property type="project" value="UniProtKB-UniRule"/>
</dbReference>
<dbReference type="GO" id="GO:0016887">
    <property type="term" value="F:ATP hydrolysis activity"/>
    <property type="evidence" value="ECO:0007669"/>
    <property type="project" value="InterPro"/>
</dbReference>
<dbReference type="GO" id="GO:0008186">
    <property type="term" value="F:ATP-dependent activity, acting on RNA"/>
    <property type="evidence" value="ECO:0007669"/>
    <property type="project" value="InterPro"/>
</dbReference>
<dbReference type="GO" id="GO:0004386">
    <property type="term" value="F:helicase activity"/>
    <property type="evidence" value="ECO:0007669"/>
    <property type="project" value="UniProtKB-UniRule"/>
</dbReference>
<dbReference type="GO" id="GO:0003723">
    <property type="term" value="F:RNA binding"/>
    <property type="evidence" value="ECO:0007669"/>
    <property type="project" value="UniProtKB-UniRule"/>
</dbReference>
<dbReference type="GO" id="GO:0006353">
    <property type="term" value="P:DNA-templated transcription termination"/>
    <property type="evidence" value="ECO:0007669"/>
    <property type="project" value="UniProtKB-UniRule"/>
</dbReference>
<dbReference type="CDD" id="cd04459">
    <property type="entry name" value="Rho_CSD"/>
    <property type="match status" value="1"/>
</dbReference>
<dbReference type="CDD" id="cd01128">
    <property type="entry name" value="rho_factor_C"/>
    <property type="match status" value="1"/>
</dbReference>
<dbReference type="Gene3D" id="2.40.50.140">
    <property type="entry name" value="Nucleic acid-binding proteins"/>
    <property type="match status" value="1"/>
</dbReference>
<dbReference type="Gene3D" id="3.40.50.300">
    <property type="entry name" value="P-loop containing nucleotide triphosphate hydrolases"/>
    <property type="match status" value="1"/>
</dbReference>
<dbReference type="HAMAP" id="MF_01884">
    <property type="entry name" value="Rho"/>
    <property type="match status" value="1"/>
</dbReference>
<dbReference type="InterPro" id="IPR003593">
    <property type="entry name" value="AAA+_ATPase"/>
</dbReference>
<dbReference type="InterPro" id="IPR000194">
    <property type="entry name" value="ATPase_F1/V1/A1_a/bsu_nucl-bd"/>
</dbReference>
<dbReference type="InterPro" id="IPR011129">
    <property type="entry name" value="CSD"/>
</dbReference>
<dbReference type="InterPro" id="IPR012340">
    <property type="entry name" value="NA-bd_OB-fold"/>
</dbReference>
<dbReference type="InterPro" id="IPR027417">
    <property type="entry name" value="P-loop_NTPase"/>
</dbReference>
<dbReference type="InterPro" id="IPR041703">
    <property type="entry name" value="Rho_factor_ATP-bd"/>
</dbReference>
<dbReference type="InterPro" id="IPR011113">
    <property type="entry name" value="Rho_RNA-bd"/>
</dbReference>
<dbReference type="InterPro" id="IPR004665">
    <property type="entry name" value="Term_rho"/>
</dbReference>
<dbReference type="NCBIfam" id="NF006886">
    <property type="entry name" value="PRK09376.1"/>
    <property type="match status" value="1"/>
</dbReference>
<dbReference type="NCBIfam" id="TIGR00767">
    <property type="entry name" value="rho"/>
    <property type="match status" value="1"/>
</dbReference>
<dbReference type="PANTHER" id="PTHR46425">
    <property type="entry name" value="TRANSCRIPTION TERMINATION FACTOR RHO"/>
    <property type="match status" value="1"/>
</dbReference>
<dbReference type="PANTHER" id="PTHR46425:SF1">
    <property type="entry name" value="TRANSCRIPTION TERMINATION FACTOR RHO"/>
    <property type="match status" value="1"/>
</dbReference>
<dbReference type="Pfam" id="PF00006">
    <property type="entry name" value="ATP-synt_ab"/>
    <property type="match status" value="1"/>
</dbReference>
<dbReference type="Pfam" id="PF07497">
    <property type="entry name" value="Rho_RNA_bind"/>
    <property type="match status" value="1"/>
</dbReference>
<dbReference type="SMART" id="SM00382">
    <property type="entry name" value="AAA"/>
    <property type="match status" value="1"/>
</dbReference>
<dbReference type="SMART" id="SM00357">
    <property type="entry name" value="CSP"/>
    <property type="match status" value="1"/>
</dbReference>
<dbReference type="SUPFAM" id="SSF50249">
    <property type="entry name" value="Nucleic acid-binding proteins"/>
    <property type="match status" value="1"/>
</dbReference>
<dbReference type="SUPFAM" id="SSF52540">
    <property type="entry name" value="P-loop containing nucleoside triphosphate hydrolases"/>
    <property type="match status" value="1"/>
</dbReference>
<dbReference type="PROSITE" id="PS51856">
    <property type="entry name" value="RHO_RNA_BD"/>
    <property type="match status" value="1"/>
</dbReference>
<proteinExistence type="inferred from homology"/>
<sequence length="515" mass="57625">MDKKNGGFDLESEIRRLDVSKEFKIEDNLKKKVVKVVAKKDSASSVTKSADLSGVKDSNGVIFSDFDYDIPSSGLENNIKTLEQSNIIKFFNGKDYVEIEKLYDKPITEVRKIVEGLGTNHTIAVTMKKTELIFLLVKILSENNIDVLFTGVLDVLSDGYGFLRTASNSYLSGGNDVYVSPSQIRLFNLRTGDILYGQIRSPRDGERFFAMVKIKSINDQDPTFAQNRIPFDNLTPLYPNVKLNLEYENCNISTRLINLFSPIGKGQRALIVSPPKAGKTTLLQKIANAITTNYSDVILMILLIDERPEEVTDMIRSVKGEVIASNFDEQASRHVQVAEMVIEKAKRLVENKKDVVILLDSITRLARAYNQTMPTSGKILSGGVDSNALHKPKRFFGSARNIEEGGSLTIIATALVDTGSKMDEVIFEEFKSTGNMELILDRSLADRRLFPAINIKKSGTRKEELLLSEEERSKILLIRRILGGVDDYEGVEVLIEKMKKSKNNEIFLKTMSNGN</sequence>
<evidence type="ECO:0000255" key="1">
    <source>
        <dbReference type="HAMAP-Rule" id="MF_01884"/>
    </source>
</evidence>
<evidence type="ECO:0000255" key="2">
    <source>
        <dbReference type="PROSITE-ProRule" id="PRU01203"/>
    </source>
</evidence>
<evidence type="ECO:0000305" key="3"/>
<name>RHO_BORBU</name>
<protein>
    <recommendedName>
        <fullName evidence="1">Transcription termination factor Rho</fullName>
        <ecNumber evidence="1">3.6.4.-</ecNumber>
    </recommendedName>
    <alternativeName>
        <fullName evidence="1">ATP-dependent helicase Rho</fullName>
    </alternativeName>
</protein>
<feature type="chain" id="PRO_0000188956" description="Transcription termination factor Rho">
    <location>
        <begin position="1"/>
        <end position="515"/>
    </location>
</feature>
<feature type="domain" description="Rho RNA-BD" evidence="2">
    <location>
        <begin position="146"/>
        <end position="221"/>
    </location>
</feature>
<feature type="binding site" evidence="1">
    <location>
        <begin position="264"/>
        <end position="269"/>
    </location>
    <ligand>
        <name>ATP</name>
        <dbReference type="ChEBI" id="CHEBI:30616"/>
    </ligand>
</feature>
<feature type="binding site" evidence="1">
    <location>
        <begin position="276"/>
        <end position="281"/>
    </location>
    <ligand>
        <name>ATP</name>
        <dbReference type="ChEBI" id="CHEBI:30616"/>
    </ligand>
</feature>
<feature type="binding site" evidence="1">
    <location>
        <position position="307"/>
    </location>
    <ligand>
        <name>ATP</name>
        <dbReference type="ChEBI" id="CHEBI:30616"/>
    </ligand>
</feature>
<feature type="sequence conflict" description="In Ref. 3; AAA73991." evidence="3" ref="3">
    <original>D</original>
    <variation>H</variation>
    <location>
        <position position="154"/>
    </location>
</feature>
<feature type="sequence conflict" description="In Ref. 3; AAA73991." evidence="3" ref="3">
    <original>E</original>
    <variation>D</variation>
    <location>
        <position position="306"/>
    </location>
</feature>
<comment type="function">
    <text evidence="1">Facilitates transcription termination by a mechanism that involves Rho binding to the nascent RNA, activation of Rho's RNA-dependent ATPase activity, and release of the mRNA from the DNA template.</text>
</comment>
<comment type="subunit">
    <text evidence="1">Homohexamer. The homohexamer assembles into an open ring structure.</text>
</comment>
<comment type="similarity">
    <text evidence="1">Belongs to the Rho family.</text>
</comment>
<comment type="sequence caution" evidence="3">
    <conflict type="erroneous initiation">
        <sequence resource="EMBL-CDS" id="AAA71920"/>
    </conflict>
    <text>Truncated N-terminus.</text>
</comment>
<accession>P33561</accession>
<accession>O51248</accession>
<organism>
    <name type="scientific">Borreliella burgdorferi (strain ATCC 35210 / DSM 4680 / CIP 102532 / B31)</name>
    <name type="common">Borrelia burgdorferi</name>
    <dbReference type="NCBI Taxonomy" id="224326"/>
    <lineage>
        <taxon>Bacteria</taxon>
        <taxon>Pseudomonadati</taxon>
        <taxon>Spirochaetota</taxon>
        <taxon>Spirochaetia</taxon>
        <taxon>Spirochaetales</taxon>
        <taxon>Borreliaceae</taxon>
        <taxon>Borreliella</taxon>
    </lineage>
</organism>
<reference key="1">
    <citation type="journal article" date="1993" name="Nucleic Acids Res.">
        <title>A Borrelia burgdorferi homolog of the Escherichia coli rho gene.</title>
        <authorList>
            <person name="Tilly K."/>
            <person name="Campbell J."/>
        </authorList>
    </citation>
    <scope>NUCLEOTIDE SEQUENCE [GENOMIC DNA]</scope>
</reference>
<reference key="2">
    <citation type="journal article" date="1997" name="Nature">
        <title>Genomic sequence of a Lyme disease spirochaete, Borrelia burgdorferi.</title>
        <authorList>
            <person name="Fraser C.M."/>
            <person name="Casjens S."/>
            <person name="Huang W.M."/>
            <person name="Sutton G.G."/>
            <person name="Clayton R.A."/>
            <person name="Lathigra R."/>
            <person name="White O."/>
            <person name="Ketchum K.A."/>
            <person name="Dodson R.J."/>
            <person name="Hickey E.K."/>
            <person name="Gwinn M.L."/>
            <person name="Dougherty B.A."/>
            <person name="Tomb J.-F."/>
            <person name="Fleischmann R.D."/>
            <person name="Richardson D.L."/>
            <person name="Peterson J.D."/>
            <person name="Kerlavage A.R."/>
            <person name="Quackenbush J."/>
            <person name="Salzberg S.L."/>
            <person name="Hanson M."/>
            <person name="van Vugt R."/>
            <person name="Palmer N."/>
            <person name="Adams M.D."/>
            <person name="Gocayne J.D."/>
            <person name="Weidman J.F."/>
            <person name="Utterback T.R."/>
            <person name="Watthey L."/>
            <person name="McDonald L.A."/>
            <person name="Artiach P."/>
            <person name="Bowman C."/>
            <person name="Garland S.A."/>
            <person name="Fujii C."/>
            <person name="Cotton M.D."/>
            <person name="Horst K."/>
            <person name="Roberts K.M."/>
            <person name="Hatch B."/>
            <person name="Smith H.O."/>
            <person name="Venter J.C."/>
        </authorList>
    </citation>
    <scope>NUCLEOTIDE SEQUENCE [LARGE SCALE GENOMIC DNA]</scope>
    <source>
        <strain>ATCC 35210 / DSM 4680 / CIP 102532 / B31</strain>
    </source>
</reference>
<reference key="3">
    <citation type="journal article" date="1994" name="Microbiology">
        <title>Conservation of gene arrangement and an unusual organization of rRNA genes in the linear chromosomes of the Lyme disease spirochaetes Borrelia burgdorferi, B. garinii and B. afzelii.</title>
        <authorList>
            <person name="Ojaimi C."/>
            <person name="Davidson B.E."/>
            <person name="Saint-Girons I."/>
            <person name="Old I.G."/>
        </authorList>
    </citation>
    <scope>NUCLEOTIDE SEQUENCE [GENOMIC DNA] OF 142-331</scope>
    <source>
        <strain>212</strain>
    </source>
</reference>